<keyword id="KW-0002">3D-structure</keyword>
<keyword id="KW-0963">Cytoplasm</keyword>
<keyword id="KW-0472">Membrane</keyword>
<keyword id="KW-0539">Nucleus</keyword>
<keyword id="KW-1267">Proteomics identification</keyword>
<keyword id="KW-1185">Reference proteome</keyword>
<keyword id="KW-0812">Transmembrane</keyword>
<keyword id="KW-1133">Transmembrane helix</keyword>
<name>INT2_HUMAN</name>
<gene>
    <name evidence="13 15" type="primary">INTS2</name>
    <name evidence="12" type="synonym">KIAA1287</name>
</gene>
<feature type="chain" id="PRO_0000236099" description="Integrator complex subunit 2">
    <location>
        <begin position="1"/>
        <end position="1204"/>
    </location>
</feature>
<feature type="transmembrane region" description="Helical" evidence="1">
    <location>
        <begin position="428"/>
        <end position="444"/>
    </location>
</feature>
<feature type="sequence variant" id="VAR_049628" description="In dbSNP:rs606072." evidence="2 3 4 11">
    <original>N</original>
    <variation>H</variation>
    <location>
        <position position="768"/>
    </location>
</feature>
<feature type="sequence conflict" description="In Ref. 1; BAA86601." evidence="14" ref="1">
    <original>M</original>
    <variation>GWRVDL</variation>
    <location>
        <position position="1"/>
    </location>
</feature>
<feature type="helix" evidence="23">
    <location>
        <begin position="20"/>
        <end position="28"/>
    </location>
</feature>
<feature type="helix" evidence="23">
    <location>
        <begin position="31"/>
        <end position="35"/>
    </location>
</feature>
<feature type="helix" evidence="23">
    <location>
        <begin position="39"/>
        <end position="44"/>
    </location>
</feature>
<feature type="helix" evidence="23">
    <location>
        <begin position="46"/>
        <end position="54"/>
    </location>
</feature>
<feature type="helix" evidence="23">
    <location>
        <begin position="62"/>
        <end position="76"/>
    </location>
</feature>
<feature type="helix" evidence="23">
    <location>
        <begin position="81"/>
        <end position="88"/>
    </location>
</feature>
<feature type="helix" evidence="23">
    <location>
        <begin position="92"/>
        <end position="106"/>
    </location>
</feature>
<feature type="helix" evidence="22">
    <location>
        <begin position="110"/>
        <end position="125"/>
    </location>
</feature>
<feature type="helix" evidence="23">
    <location>
        <begin position="126"/>
        <end position="132"/>
    </location>
</feature>
<feature type="helix" evidence="23">
    <location>
        <begin position="135"/>
        <end position="155"/>
    </location>
</feature>
<feature type="strand" evidence="23">
    <location>
        <begin position="156"/>
        <end position="158"/>
    </location>
</feature>
<feature type="turn" evidence="22">
    <location>
        <begin position="162"/>
        <end position="164"/>
    </location>
</feature>
<feature type="strand" evidence="23">
    <location>
        <begin position="166"/>
        <end position="169"/>
    </location>
</feature>
<feature type="helix" evidence="23">
    <location>
        <begin position="174"/>
        <end position="187"/>
    </location>
</feature>
<feature type="turn" evidence="23">
    <location>
        <begin position="189"/>
        <end position="191"/>
    </location>
</feature>
<feature type="helix" evidence="23">
    <location>
        <begin position="194"/>
        <end position="201"/>
    </location>
</feature>
<feature type="helix" evidence="23">
    <location>
        <begin position="207"/>
        <end position="217"/>
    </location>
</feature>
<feature type="helix" evidence="23">
    <location>
        <begin position="219"/>
        <end position="221"/>
    </location>
</feature>
<feature type="helix" evidence="23">
    <location>
        <begin position="222"/>
        <end position="232"/>
    </location>
</feature>
<feature type="turn" evidence="23">
    <location>
        <begin position="237"/>
        <end position="239"/>
    </location>
</feature>
<feature type="helix" evidence="23">
    <location>
        <begin position="241"/>
        <end position="256"/>
    </location>
</feature>
<feature type="helix" evidence="23">
    <location>
        <begin position="258"/>
        <end position="260"/>
    </location>
</feature>
<feature type="helix" evidence="23">
    <location>
        <begin position="261"/>
        <end position="271"/>
    </location>
</feature>
<feature type="helix" evidence="23">
    <location>
        <begin position="275"/>
        <end position="286"/>
    </location>
</feature>
<feature type="helix" evidence="23">
    <location>
        <begin position="297"/>
        <end position="307"/>
    </location>
</feature>
<feature type="helix" evidence="23">
    <location>
        <begin position="311"/>
        <end position="325"/>
    </location>
</feature>
<feature type="strand" evidence="22">
    <location>
        <begin position="327"/>
        <end position="329"/>
    </location>
</feature>
<feature type="helix" evidence="23">
    <location>
        <begin position="335"/>
        <end position="350"/>
    </location>
</feature>
<feature type="helix" evidence="22">
    <location>
        <begin position="351"/>
        <end position="365"/>
    </location>
</feature>
<feature type="helix" evidence="22">
    <location>
        <begin position="368"/>
        <end position="373"/>
    </location>
</feature>
<feature type="strand" evidence="22">
    <location>
        <begin position="374"/>
        <end position="376"/>
    </location>
</feature>
<feature type="turn" evidence="23">
    <location>
        <begin position="379"/>
        <end position="381"/>
    </location>
</feature>
<feature type="helix" evidence="23">
    <location>
        <begin position="382"/>
        <end position="397"/>
    </location>
</feature>
<feature type="helix" evidence="23">
    <location>
        <begin position="405"/>
        <end position="415"/>
    </location>
</feature>
<feature type="helix" evidence="23">
    <location>
        <begin position="423"/>
        <end position="438"/>
    </location>
</feature>
<feature type="helix" evidence="23">
    <location>
        <begin position="440"/>
        <end position="442"/>
    </location>
</feature>
<feature type="helix" evidence="23">
    <location>
        <begin position="446"/>
        <end position="461"/>
    </location>
</feature>
<feature type="helix" evidence="23">
    <location>
        <begin position="477"/>
        <end position="489"/>
    </location>
</feature>
<feature type="helix" evidence="23">
    <location>
        <begin position="492"/>
        <end position="503"/>
    </location>
</feature>
<feature type="helix" evidence="23">
    <location>
        <begin position="512"/>
        <end position="524"/>
    </location>
</feature>
<feature type="helix" evidence="23">
    <location>
        <begin position="528"/>
        <end position="536"/>
    </location>
</feature>
<feature type="strand" evidence="23">
    <location>
        <begin position="546"/>
        <end position="548"/>
    </location>
</feature>
<feature type="helix" evidence="23">
    <location>
        <begin position="553"/>
        <end position="563"/>
    </location>
</feature>
<feature type="turn" evidence="23">
    <location>
        <begin position="567"/>
        <end position="569"/>
    </location>
</feature>
<feature type="helix" evidence="23">
    <location>
        <begin position="574"/>
        <end position="581"/>
    </location>
</feature>
<feature type="helix" evidence="23">
    <location>
        <begin position="592"/>
        <end position="603"/>
    </location>
</feature>
<feature type="helix" evidence="23">
    <location>
        <begin position="621"/>
        <end position="625"/>
    </location>
</feature>
<feature type="turn" evidence="23">
    <location>
        <begin position="626"/>
        <end position="628"/>
    </location>
</feature>
<feature type="helix" evidence="23">
    <location>
        <begin position="645"/>
        <end position="664"/>
    </location>
</feature>
<feature type="helix" evidence="23">
    <location>
        <begin position="666"/>
        <end position="668"/>
    </location>
</feature>
<feature type="turn" evidence="23">
    <location>
        <begin position="673"/>
        <end position="677"/>
    </location>
</feature>
<feature type="helix" evidence="23">
    <location>
        <begin position="681"/>
        <end position="686"/>
    </location>
</feature>
<feature type="helix" evidence="23">
    <location>
        <begin position="689"/>
        <end position="698"/>
    </location>
</feature>
<feature type="helix" evidence="23">
    <location>
        <begin position="701"/>
        <end position="705"/>
    </location>
</feature>
<feature type="helix" evidence="23">
    <location>
        <begin position="706"/>
        <end position="717"/>
    </location>
</feature>
<feature type="helix" evidence="23">
    <location>
        <begin position="719"/>
        <end position="721"/>
    </location>
</feature>
<feature type="helix" evidence="23">
    <location>
        <begin position="724"/>
        <end position="728"/>
    </location>
</feature>
<feature type="strand" evidence="23">
    <location>
        <begin position="733"/>
        <end position="735"/>
    </location>
</feature>
<feature type="helix" evidence="23">
    <location>
        <begin position="736"/>
        <end position="744"/>
    </location>
</feature>
<feature type="helix" evidence="23">
    <location>
        <begin position="745"/>
        <end position="747"/>
    </location>
</feature>
<feature type="helix" evidence="23">
    <location>
        <begin position="754"/>
        <end position="761"/>
    </location>
</feature>
<feature type="strand" evidence="22">
    <location>
        <begin position="762"/>
        <end position="764"/>
    </location>
</feature>
<feature type="helix" evidence="23">
    <location>
        <begin position="768"/>
        <end position="778"/>
    </location>
</feature>
<feature type="helix" evidence="23">
    <location>
        <begin position="784"/>
        <end position="789"/>
    </location>
</feature>
<feature type="helix" evidence="23">
    <location>
        <begin position="790"/>
        <end position="795"/>
    </location>
</feature>
<feature type="helix" evidence="23">
    <location>
        <begin position="796"/>
        <end position="801"/>
    </location>
</feature>
<feature type="strand" evidence="22">
    <location>
        <begin position="802"/>
        <end position="804"/>
    </location>
</feature>
<feature type="helix" evidence="23">
    <location>
        <begin position="807"/>
        <end position="821"/>
    </location>
</feature>
<feature type="helix" evidence="23">
    <location>
        <begin position="825"/>
        <end position="835"/>
    </location>
</feature>
<feature type="helix" evidence="23">
    <location>
        <begin position="850"/>
        <end position="855"/>
    </location>
</feature>
<feature type="helix" evidence="23">
    <location>
        <begin position="857"/>
        <end position="861"/>
    </location>
</feature>
<feature type="helix" evidence="23">
    <location>
        <begin position="865"/>
        <end position="869"/>
    </location>
</feature>
<feature type="helix" evidence="23">
    <location>
        <begin position="871"/>
        <end position="900"/>
    </location>
</feature>
<feature type="helix" evidence="23">
    <location>
        <begin position="923"/>
        <end position="945"/>
    </location>
</feature>
<feature type="helix" evidence="23">
    <location>
        <begin position="950"/>
        <end position="953"/>
    </location>
</feature>
<feature type="strand" evidence="23">
    <location>
        <begin position="986"/>
        <end position="988"/>
    </location>
</feature>
<feature type="helix" evidence="23">
    <location>
        <begin position="989"/>
        <end position="1007"/>
    </location>
</feature>
<feature type="helix" evidence="23">
    <location>
        <begin position="1009"/>
        <end position="1018"/>
    </location>
</feature>
<feature type="helix" evidence="23">
    <location>
        <begin position="1022"/>
        <end position="1024"/>
    </location>
</feature>
<feature type="helix" evidence="23">
    <location>
        <begin position="1025"/>
        <end position="1031"/>
    </location>
</feature>
<feature type="helix" evidence="23">
    <location>
        <begin position="1033"/>
        <end position="1037"/>
    </location>
</feature>
<feature type="helix" evidence="23">
    <location>
        <begin position="1038"/>
        <end position="1046"/>
    </location>
</feature>
<feature type="helix" evidence="23">
    <location>
        <begin position="1051"/>
        <end position="1067"/>
    </location>
</feature>
<feature type="helix" evidence="23">
    <location>
        <begin position="1071"/>
        <end position="1088"/>
    </location>
</feature>
<feature type="helix" evidence="23">
    <location>
        <begin position="1093"/>
        <end position="1103"/>
    </location>
</feature>
<feature type="helix" evidence="23">
    <location>
        <begin position="1106"/>
        <end position="1113"/>
    </location>
</feature>
<feature type="helix" evidence="23">
    <location>
        <begin position="1115"/>
        <end position="1117"/>
    </location>
</feature>
<feature type="helix" evidence="23">
    <location>
        <begin position="1118"/>
        <end position="1138"/>
    </location>
</feature>
<feature type="helix" evidence="23">
    <location>
        <begin position="1145"/>
        <end position="1148"/>
    </location>
</feature>
<feature type="helix" evidence="23">
    <location>
        <begin position="1181"/>
        <end position="1199"/>
    </location>
</feature>
<comment type="function">
    <text evidence="4 5 6 9">Component of the integrator complex, a multiprotein complex that terminates RNA polymerase II (Pol II) transcription in the promoter-proximal region of genes (PubMed:33243860, PubMed:38570683). The integrator complex provides a quality checkpoint during transcription elongation by driving premature transcription termination of transcripts that are unfavorably configured for transcriptional elongation: the complex terminates transcription by (1) catalyzing dephosphorylation of the C-terminal domain (CTD) of Pol II subunit POLR2A/RPB1 and SUPT5H/SPT5, (2) degrading the exiting nascent RNA transcript via endonuclease activity and (3) promoting the release of Pol II from bound DNA (PubMed:33243860, PubMed:38570683). The integrator complex is also involved in terminating the synthesis of non-coding Pol II transcripts, such as enhancer RNAs (eRNAs), small nuclear RNAs (snRNAs), telomerase RNAs and long non-coding RNAs (lncRNAs) (PubMed:16239144). Mediates recruitment of cytoplasmic dynein to the nuclear envelope, probably as component of the integrator complex (PubMed:23904267).</text>
</comment>
<comment type="subunit">
    <text evidence="4 6 7 8 9 10">Component of the Integrator complex, composed of core subunits INTS1, INTS2, INTS3, INTS4, INTS5, INTS6, INTS7, INTS8, INTS9/RC74, INTS10, INTS11/CPSF3L, INTS12, INTS13, INTS14 and INTS15 (PubMed:16239144, PubMed:33243860, PubMed:34762484, PubMed:38570683, PubMed:39032490). The core complex associates with protein phosphatase 2A subunits PPP2CA and PPP2R1A, to form the Integrator-PP2A (INTAC) complex (PubMed:33243860, PubMed:34762484, PubMed:36869814, PubMed:38570683).</text>
</comment>
<comment type="interaction">
    <interactant intactId="EBI-8471507">
        <id>Q9H0H0</id>
    </interactant>
    <interactant intactId="EBI-10961624">
        <id>Q2TAC2-2</id>
        <label>CCDC57</label>
    </interactant>
    <organismsDiffer>false</organismsDiffer>
    <experiments>3</experiments>
</comment>
<comment type="interaction">
    <interactant intactId="EBI-8471507">
        <id>Q9H0H0</id>
    </interactant>
    <interactant intactId="EBI-745369">
        <id>Q9H4E7</id>
        <label>DEF6</label>
    </interactant>
    <organismsDiffer>false</organismsDiffer>
    <experiments>3</experiments>
</comment>
<comment type="interaction">
    <interactant intactId="EBI-8471507">
        <id>Q9H0H0</id>
    </interactant>
    <interactant intactId="EBI-713635">
        <id>O43639</id>
        <label>NCK2</label>
    </interactant>
    <organismsDiffer>false</organismsDiffer>
    <experiments>3</experiments>
</comment>
<comment type="subcellular location">
    <subcellularLocation>
        <location evidence="5 10">Nucleus</location>
    </subcellularLocation>
    <subcellularLocation>
        <location evidence="4">Nucleus membrane</location>
        <topology evidence="1">Single-pass membrane protein</topology>
    </subcellularLocation>
    <subcellularLocation>
        <location evidence="5">Cytoplasm</location>
    </subcellularLocation>
</comment>
<comment type="similarity">
    <text evidence="14">Belongs to the Integrator subunit 2 family.</text>
</comment>
<comment type="caution">
    <text evidence="14">It is uncertain whether Met-1 or Met-9 is the initiator. Orthologous sequences (mouse and chicken) have shorter N-terminus.</text>
</comment>
<sequence>MKDQQTVIMTECTSLQFVSPFAFEAMQKVDVVCLASLSDPELRLLLPCLVRMALCAPADQSQSWAQDKKLILRLLSGVEAVNSIVALLSVDFHALEQDASKEQQLRHKLGGGSGESILVSQLQHGLTLEFEHSDSPRRLRLVLSELLAIMNKVSESNGEFFFKSSELFESPVYLEEAADVLCILQAELPSLLPIVDVAEALLHVRNGAWFLCLLVANVPDSFNEVCRGLIKNGERQDEESLGGRRRTDALRFLCKMNPSQALKVRGMVVEECHLPGLGVALTLDHTKNEACEDGVSDLVCFVSGLLLGTNAKVRTWFGTFIRNGQQRKRETSSSVLWQMRRQLLLELMGILPTVRSTRIVEEADVDMEPNVSVYSGLKEEHVVKASALLRLYCALMGIAGLKPTEEEAEQLLQLMTSRPPATPAGVRFVSLSFCMLLAFSTLVSTPEQEQLMVVWLSWMIKEEAYFESTSGVSASFGEMLLLVAMYFHSNQLSAIIDLVCSTLGMKIVIKPSSLSRMKTIFTQEIFTEQVVTAHAVRVPVTSNLSANITGFLPIHCIYQLLRSRSFTKHKVSIKDWIYRQLCETSTPLHPQLLPLIDVYINSILTPASKSNPEATNQPVTEQEILNIFQGVIGGDNIRLNQRFSITAQLLVLYYILSYEEALLANTKTLAAMQRKPKSYSSSLMDQIPIKFLIRQAQGLQQELGGLHSALLRLLATNYPHLCIVDDWICEEEITGTDALLRRMLLTNNAKNHSPKQLQEAFSAVPVNNTQVMQIIEHLTLLSASELIPYAEVLTSNMSQLLNSGVPRRILQTVNKLWMVLNTVMPRRLWVMTVNALQPSIKFVRQQKYTQNDLMIDPLIVLRCDQRVHRCPPLMDITLHMLNGYLLASKAYLSAHLKETEQDRPSQNNTIGLVGQTDAPEVTREELKNALLAAQDSAAVQILLEICLPTEEEKANGVNPDSLLRNVQSVITTSAPNKGMEEGEDNLLCNLREVQCLICCLLHQMYIADPNIAKLVHFQGYPCELLPLTVAGIPSMHICLDFIPELIAQPELEKQIFAIQLLSHLCIQYALPKSLSVARLAVNVMGTLLTVLTQAKRYAFFMPTLPSLVSFCRAFPPLYEDIMSLLIQIGQVCASDVATQTRDIDPIITRLQQIKEKPSGWSQICKDSSYKNGSRDTGSMDPDVQLCHCIERTVIEIINMSVSGI</sequence>
<proteinExistence type="evidence at protein level"/>
<dbReference type="EMBL" id="AB033113">
    <property type="protein sequence ID" value="BAA86601.1"/>
    <property type="molecule type" value="mRNA"/>
</dbReference>
<dbReference type="EMBL" id="AL136800">
    <property type="protein sequence ID" value="CAB66734.1"/>
    <property type="molecule type" value="mRNA"/>
</dbReference>
<dbReference type="EMBL" id="CR533582">
    <property type="protein sequence ID" value="CAG38656.1"/>
    <property type="molecule type" value="mRNA"/>
</dbReference>
<dbReference type="EMBL" id="AC060798">
    <property type="status" value="NOT_ANNOTATED_CDS"/>
    <property type="molecule type" value="Genomic_DNA"/>
</dbReference>
<dbReference type="EMBL" id="BK005721">
    <property type="protein sequence ID" value="DAA05721.1"/>
    <property type="molecule type" value="mRNA"/>
</dbReference>
<dbReference type="CCDS" id="CCDS45750.1"/>
<dbReference type="RefSeq" id="NP_001317346.1">
    <property type="nucleotide sequence ID" value="NM_001330417.1"/>
</dbReference>
<dbReference type="RefSeq" id="NP_065799.2">
    <property type="nucleotide sequence ID" value="NM_020748.4"/>
</dbReference>
<dbReference type="PDB" id="7CUN">
    <property type="method" value="EM"/>
    <property type="resolution" value="3.50 A"/>
    <property type="chains" value="B=1-1204"/>
</dbReference>
<dbReference type="PDB" id="7PKS">
    <property type="method" value="EM"/>
    <property type="resolution" value="3.60 A"/>
    <property type="chains" value="b=1-1204"/>
</dbReference>
<dbReference type="PDB" id="7YCX">
    <property type="method" value="EM"/>
    <property type="resolution" value="4.18 A"/>
    <property type="chains" value="B=1-1204"/>
</dbReference>
<dbReference type="PDB" id="8RBX">
    <property type="method" value="EM"/>
    <property type="resolution" value="4.10 A"/>
    <property type="chains" value="b=1-1204"/>
</dbReference>
<dbReference type="PDB" id="8RBZ">
    <property type="method" value="EM"/>
    <property type="resolution" value="3.70 A"/>
    <property type="chains" value="b=1-1204"/>
</dbReference>
<dbReference type="PDB" id="8RC4">
    <property type="method" value="EM"/>
    <property type="resolution" value="3.10 A"/>
    <property type="chains" value="b=1-1204"/>
</dbReference>
<dbReference type="PDB" id="8YJB">
    <property type="method" value="EM"/>
    <property type="resolution" value="4.10 A"/>
    <property type="chains" value="B=1-1204"/>
</dbReference>
<dbReference type="PDBsum" id="7CUN"/>
<dbReference type="PDBsum" id="7PKS"/>
<dbReference type="PDBsum" id="7YCX"/>
<dbReference type="PDBsum" id="8RBX"/>
<dbReference type="PDBsum" id="8RBZ"/>
<dbReference type="PDBsum" id="8RC4"/>
<dbReference type="PDBsum" id="8YJB"/>
<dbReference type="EMDB" id="EMD-13479"/>
<dbReference type="EMDB" id="EMD-19038"/>
<dbReference type="EMDB" id="EMD-19040"/>
<dbReference type="EMDB" id="EMD-19047"/>
<dbReference type="EMDB" id="EMD-30473"/>
<dbReference type="EMDB" id="EMD-33741"/>
<dbReference type="EMDB" id="EMD-39338"/>
<dbReference type="SMR" id="Q9H0H0"/>
<dbReference type="BioGRID" id="121572">
    <property type="interactions" value="127"/>
</dbReference>
<dbReference type="ComplexPortal" id="CPX-6441">
    <property type="entry name" value="Integrator complex"/>
</dbReference>
<dbReference type="CORUM" id="Q9H0H0"/>
<dbReference type="DIP" id="DIP-48477N"/>
<dbReference type="FunCoup" id="Q9H0H0">
    <property type="interactions" value="5412"/>
</dbReference>
<dbReference type="IntAct" id="Q9H0H0">
    <property type="interactions" value="74"/>
</dbReference>
<dbReference type="MINT" id="Q9H0H0"/>
<dbReference type="STRING" id="9606.ENSP00000414237"/>
<dbReference type="GlyGen" id="Q9H0H0">
    <property type="glycosylation" value="3 sites, 1 N-linked glycan (1 site), 1 O-linked glycan (1 site)"/>
</dbReference>
<dbReference type="iPTMnet" id="Q9H0H0"/>
<dbReference type="PhosphoSitePlus" id="Q9H0H0"/>
<dbReference type="SwissPalm" id="Q9H0H0"/>
<dbReference type="BioMuta" id="INTS2"/>
<dbReference type="DMDM" id="296434542"/>
<dbReference type="jPOST" id="Q9H0H0"/>
<dbReference type="MassIVE" id="Q9H0H0"/>
<dbReference type="PaxDb" id="9606-ENSP00000414237"/>
<dbReference type="PeptideAtlas" id="Q9H0H0"/>
<dbReference type="ProteomicsDB" id="80277"/>
<dbReference type="Pumba" id="Q9H0H0"/>
<dbReference type="Antibodypedia" id="57004">
    <property type="antibodies" value="65 antibodies from 19 providers"/>
</dbReference>
<dbReference type="DNASU" id="57508"/>
<dbReference type="Ensembl" id="ENST00000444766.7">
    <property type="protein sequence ID" value="ENSP00000414237.3"/>
    <property type="gene ID" value="ENSG00000108506.14"/>
</dbReference>
<dbReference type="GeneID" id="57508"/>
<dbReference type="KEGG" id="hsa:57508"/>
<dbReference type="UCSC" id="uc002izn.4">
    <property type="organism name" value="human"/>
</dbReference>
<dbReference type="AGR" id="HGNC:29241"/>
<dbReference type="CTD" id="57508"/>
<dbReference type="DisGeNET" id="57508"/>
<dbReference type="GeneCards" id="INTS2"/>
<dbReference type="HGNC" id="HGNC:29241">
    <property type="gene designation" value="INTS2"/>
</dbReference>
<dbReference type="HPA" id="ENSG00000108506">
    <property type="expression patterns" value="Low tissue specificity"/>
</dbReference>
<dbReference type="MIM" id="611346">
    <property type="type" value="gene"/>
</dbReference>
<dbReference type="neXtProt" id="NX_Q9H0H0"/>
<dbReference type="OpenTargets" id="ENSG00000108506"/>
<dbReference type="PharmGKB" id="PA142671605"/>
<dbReference type="VEuPathDB" id="HostDB:ENSG00000108506"/>
<dbReference type="eggNOG" id="ENOG502QSP2">
    <property type="taxonomic scope" value="Eukaryota"/>
</dbReference>
<dbReference type="GeneTree" id="ENSGT00390000011888"/>
<dbReference type="InParanoid" id="Q9H0H0"/>
<dbReference type="OrthoDB" id="70899at2759"/>
<dbReference type="PAN-GO" id="Q9H0H0">
    <property type="GO annotations" value="2 GO annotations based on evolutionary models"/>
</dbReference>
<dbReference type="PhylomeDB" id="Q9H0H0"/>
<dbReference type="TreeFam" id="TF324737"/>
<dbReference type="PathwayCommons" id="Q9H0H0"/>
<dbReference type="Reactome" id="R-HSA-6807505">
    <property type="pathway name" value="RNA polymerase II transcribes snRNA genes"/>
</dbReference>
<dbReference type="SignaLink" id="Q9H0H0"/>
<dbReference type="SIGNOR" id="Q9H0H0"/>
<dbReference type="BioGRID-ORCS" id="57508">
    <property type="hits" value="675 hits in 1164 CRISPR screens"/>
</dbReference>
<dbReference type="ChiTaRS" id="INTS2">
    <property type="organism name" value="human"/>
</dbReference>
<dbReference type="GenomeRNAi" id="57508"/>
<dbReference type="Pharos" id="Q9H0H0">
    <property type="development level" value="Tbio"/>
</dbReference>
<dbReference type="PRO" id="PR:Q9H0H0"/>
<dbReference type="Proteomes" id="UP000005640">
    <property type="component" value="Chromosome 17"/>
</dbReference>
<dbReference type="RNAct" id="Q9H0H0">
    <property type="molecule type" value="protein"/>
</dbReference>
<dbReference type="Bgee" id="ENSG00000108506">
    <property type="expression patterns" value="Expressed in oviduct epithelium and 181 other cell types or tissues"/>
</dbReference>
<dbReference type="ExpressionAtlas" id="Q9H0H0">
    <property type="expression patterns" value="baseline and differential"/>
</dbReference>
<dbReference type="GO" id="GO:0005737">
    <property type="term" value="C:cytoplasm"/>
    <property type="evidence" value="ECO:0000314"/>
    <property type="project" value="UniProtKB"/>
</dbReference>
<dbReference type="GO" id="GO:0160232">
    <property type="term" value="C:INTAC complex"/>
    <property type="evidence" value="ECO:0000314"/>
    <property type="project" value="UniProtKB"/>
</dbReference>
<dbReference type="GO" id="GO:0032039">
    <property type="term" value="C:integrator complex"/>
    <property type="evidence" value="ECO:0000314"/>
    <property type="project" value="UniProtKB"/>
</dbReference>
<dbReference type="GO" id="GO:0016020">
    <property type="term" value="C:membrane"/>
    <property type="evidence" value="ECO:0007005"/>
    <property type="project" value="UniProtKB"/>
</dbReference>
<dbReference type="GO" id="GO:0031965">
    <property type="term" value="C:nuclear membrane"/>
    <property type="evidence" value="ECO:0007669"/>
    <property type="project" value="UniProtKB-SubCell"/>
</dbReference>
<dbReference type="GO" id="GO:0005654">
    <property type="term" value="C:nucleoplasm"/>
    <property type="evidence" value="ECO:0000304"/>
    <property type="project" value="Reactome"/>
</dbReference>
<dbReference type="GO" id="GO:0005634">
    <property type="term" value="C:nucleus"/>
    <property type="evidence" value="ECO:0000314"/>
    <property type="project" value="UniProtKB"/>
</dbReference>
<dbReference type="GO" id="GO:0034243">
    <property type="term" value="P:regulation of transcription elongation by RNA polymerase II"/>
    <property type="evidence" value="ECO:0000303"/>
    <property type="project" value="ComplexPortal"/>
</dbReference>
<dbReference type="GO" id="GO:0160240">
    <property type="term" value="P:RNA polymerase II transcription initiation surveillance"/>
    <property type="evidence" value="ECO:0000314"/>
    <property type="project" value="UniProtKB"/>
</dbReference>
<dbReference type="GO" id="GO:0034472">
    <property type="term" value="P:snRNA 3'-end processing"/>
    <property type="evidence" value="ECO:0000318"/>
    <property type="project" value="GO_Central"/>
</dbReference>
<dbReference type="GO" id="GO:0016180">
    <property type="term" value="P:snRNA processing"/>
    <property type="evidence" value="ECO:0000314"/>
    <property type="project" value="HGNC-UCL"/>
</dbReference>
<dbReference type="InterPro" id="IPR026236">
    <property type="entry name" value="Int2_metazoa"/>
</dbReference>
<dbReference type="InterPro" id="IPR029321">
    <property type="entry name" value="INTS2"/>
</dbReference>
<dbReference type="PANTHER" id="PTHR28608">
    <property type="entry name" value="INTEGRATOR COMPLEX SUBUNIT 2"/>
    <property type="match status" value="1"/>
</dbReference>
<dbReference type="PANTHER" id="PTHR28608:SF1">
    <property type="entry name" value="INTEGRATOR COMPLEX SUBUNIT 2"/>
    <property type="match status" value="1"/>
</dbReference>
<dbReference type="Pfam" id="PF14750">
    <property type="entry name" value="INTS2"/>
    <property type="match status" value="1"/>
</dbReference>
<dbReference type="PRINTS" id="PR02105">
    <property type="entry name" value="INTSUBUNIT2"/>
</dbReference>
<organism>
    <name type="scientific">Homo sapiens</name>
    <name type="common">Human</name>
    <dbReference type="NCBI Taxonomy" id="9606"/>
    <lineage>
        <taxon>Eukaryota</taxon>
        <taxon>Metazoa</taxon>
        <taxon>Chordata</taxon>
        <taxon>Craniata</taxon>
        <taxon>Vertebrata</taxon>
        <taxon>Euteleostomi</taxon>
        <taxon>Mammalia</taxon>
        <taxon>Eutheria</taxon>
        <taxon>Euarchontoglires</taxon>
        <taxon>Primates</taxon>
        <taxon>Haplorrhini</taxon>
        <taxon>Catarrhini</taxon>
        <taxon>Hominidae</taxon>
        <taxon>Homo</taxon>
    </lineage>
</organism>
<accession>Q9H0H0</accession>
<accession>Q9ULD3</accession>
<reference key="1">
    <citation type="journal article" date="1999" name="DNA Res.">
        <title>Prediction of the coding sequences of unidentified human genes. XV. The complete sequences of 100 new cDNA clones from brain which code for large proteins in vitro.</title>
        <authorList>
            <person name="Nagase T."/>
            <person name="Ishikawa K."/>
            <person name="Kikuno R."/>
            <person name="Hirosawa M."/>
            <person name="Nomura N."/>
            <person name="Ohara O."/>
        </authorList>
    </citation>
    <scope>NUCLEOTIDE SEQUENCE [LARGE SCALE MRNA]</scope>
    <scope>VARIANT HIS-768</scope>
    <source>
        <tissue>Brain</tissue>
    </source>
</reference>
<reference key="2">
    <citation type="journal article" date="2001" name="Genome Res.">
        <title>Towards a catalog of human genes and proteins: sequencing and analysis of 500 novel complete protein coding human cDNAs.</title>
        <authorList>
            <person name="Wiemann S."/>
            <person name="Weil B."/>
            <person name="Wellenreuther R."/>
            <person name="Gassenhuber J."/>
            <person name="Glassl S."/>
            <person name="Ansorge W."/>
            <person name="Boecher M."/>
            <person name="Bloecker H."/>
            <person name="Bauersachs S."/>
            <person name="Blum H."/>
            <person name="Lauber J."/>
            <person name="Duesterhoeft A."/>
            <person name="Beyer A."/>
            <person name="Koehrer K."/>
            <person name="Strack N."/>
            <person name="Mewes H.-W."/>
            <person name="Ottenwaelder B."/>
            <person name="Obermaier B."/>
            <person name="Tampe J."/>
            <person name="Heubner D."/>
            <person name="Wambutt R."/>
            <person name="Korn B."/>
            <person name="Klein M."/>
            <person name="Poustka A."/>
        </authorList>
    </citation>
    <scope>NUCLEOTIDE SEQUENCE [LARGE SCALE MRNA]</scope>
    <scope>VARIANT HIS-768</scope>
    <source>
        <tissue>Testis</tissue>
    </source>
</reference>
<reference key="3">
    <citation type="submission" date="2004-06" db="EMBL/GenBank/DDBJ databases">
        <title>Cloning of human full open reading frames in Gateway(TM) system entry vector (pDONR201).</title>
        <authorList>
            <person name="Ebert L."/>
            <person name="Schick M."/>
            <person name="Neubert P."/>
            <person name="Schatten R."/>
            <person name="Henze S."/>
            <person name="Korn B."/>
        </authorList>
    </citation>
    <scope>NUCLEOTIDE SEQUENCE [LARGE SCALE MRNA]</scope>
    <scope>VARIANT HIS-768</scope>
</reference>
<reference key="4">
    <citation type="journal article" date="2006" name="Nature">
        <title>DNA sequence of human chromosome 17 and analysis of rearrangement in the human lineage.</title>
        <authorList>
            <person name="Zody M.C."/>
            <person name="Garber M."/>
            <person name="Adams D.J."/>
            <person name="Sharpe T."/>
            <person name="Harrow J."/>
            <person name="Lupski J.R."/>
            <person name="Nicholson C."/>
            <person name="Searle S.M."/>
            <person name="Wilming L."/>
            <person name="Young S.K."/>
            <person name="Abouelleil A."/>
            <person name="Allen N.R."/>
            <person name="Bi W."/>
            <person name="Bloom T."/>
            <person name="Borowsky M.L."/>
            <person name="Bugalter B.E."/>
            <person name="Butler J."/>
            <person name="Chang J.L."/>
            <person name="Chen C.-K."/>
            <person name="Cook A."/>
            <person name="Corum B."/>
            <person name="Cuomo C.A."/>
            <person name="de Jong P.J."/>
            <person name="DeCaprio D."/>
            <person name="Dewar K."/>
            <person name="FitzGerald M."/>
            <person name="Gilbert J."/>
            <person name="Gibson R."/>
            <person name="Gnerre S."/>
            <person name="Goldstein S."/>
            <person name="Grafham D.V."/>
            <person name="Grocock R."/>
            <person name="Hafez N."/>
            <person name="Hagopian D.S."/>
            <person name="Hart E."/>
            <person name="Norman C.H."/>
            <person name="Humphray S."/>
            <person name="Jaffe D.B."/>
            <person name="Jones M."/>
            <person name="Kamal M."/>
            <person name="Khodiyar V.K."/>
            <person name="LaButti K."/>
            <person name="Laird G."/>
            <person name="Lehoczky J."/>
            <person name="Liu X."/>
            <person name="Lokyitsang T."/>
            <person name="Loveland J."/>
            <person name="Lui A."/>
            <person name="Macdonald P."/>
            <person name="Major J.E."/>
            <person name="Matthews L."/>
            <person name="Mauceli E."/>
            <person name="McCarroll S.A."/>
            <person name="Mihalev A.H."/>
            <person name="Mudge J."/>
            <person name="Nguyen C."/>
            <person name="Nicol R."/>
            <person name="O'Leary S.B."/>
            <person name="Osoegawa K."/>
            <person name="Schwartz D.C."/>
            <person name="Shaw-Smith C."/>
            <person name="Stankiewicz P."/>
            <person name="Steward C."/>
            <person name="Swarbreck D."/>
            <person name="Venkataraman V."/>
            <person name="Whittaker C.A."/>
            <person name="Yang X."/>
            <person name="Zimmer A.R."/>
            <person name="Bradley A."/>
            <person name="Hubbard T."/>
            <person name="Birren B.W."/>
            <person name="Rogers J."/>
            <person name="Lander E.S."/>
            <person name="Nusbaum C."/>
        </authorList>
    </citation>
    <scope>NUCLEOTIDE SEQUENCE [LARGE SCALE GENOMIC DNA]</scope>
</reference>
<reference key="5">
    <citation type="journal article" date="2005" name="Cell">
        <title>Integrator, a multiprotein mediator of small nuclear RNA processing, associates with the C-terminal repeat of RNA polymerase II.</title>
        <authorList>
            <person name="Baillat D."/>
            <person name="Hakimi M.-A."/>
            <person name="Naeaer A.M."/>
            <person name="Shilatifard A."/>
            <person name="Cooch N."/>
            <person name="Shiekhattar R."/>
        </authorList>
    </citation>
    <scope>FUNCTION</scope>
    <scope>IDENTIFICATION IN THE INTEGRATOR COMPLEX</scope>
    <scope>IDENTIFICATION BY MASS SPECTROMETRY</scope>
    <scope>SUBCELLULAR LOCATION</scope>
    <scope>VARIANT HIS-768</scope>
</reference>
<reference key="6">
    <citation type="journal article" date="2013" name="Mol. Biol. Cell">
        <title>Nuclear-localized Asunder regulates cytoplasmic dynein localization via its role in the integrator complex.</title>
        <authorList>
            <person name="Jodoin J.N."/>
            <person name="Sitaram P."/>
            <person name="Albrecht T.R."/>
            <person name="May S.B."/>
            <person name="Shboul M."/>
            <person name="Lee E."/>
            <person name="Reversade B."/>
            <person name="Wagner E.J."/>
            <person name="Lee L.A."/>
        </authorList>
    </citation>
    <scope>FUNCTION</scope>
    <scope>SUBCELLULAR LOCATION</scope>
</reference>
<reference key="7">
    <citation type="journal article" date="2024" name="Mol. Cell">
        <title>Cytoplasmic binding partners of the Integrator endonuclease INTS11 and its paralog CPSF73 are required for their nuclear function.</title>
        <authorList>
            <person name="Lin M.H."/>
            <person name="Jensen M.K."/>
            <person name="Elrod N.D."/>
            <person name="Chu H.F."/>
            <person name="Haseley M."/>
            <person name="Beam A.C."/>
            <person name="Huang K.L."/>
            <person name="Chiang W."/>
            <person name="Russell W.K."/>
            <person name="Williams K."/>
            <person name="Proschel C."/>
            <person name="Wagner E.J."/>
            <person name="Tong L."/>
        </authorList>
    </citation>
    <scope>IDENTIFICATION IN THE INTEGRATOR COMPLEX</scope>
    <scope>SUBCELLULAR LOCATION</scope>
</reference>
<reference evidence="16" key="8">
    <citation type="journal article" date="2020" name="Science">
        <title>Identification of Integrator-PP2A complex (INTAC), an RNA polymerase II phosphatase.</title>
        <authorList>
            <person name="Zheng H."/>
            <person name="Qi Y."/>
            <person name="Hu S."/>
            <person name="Cao X."/>
            <person name="Xu C."/>
            <person name="Yin Z."/>
            <person name="Chen X."/>
            <person name="Li Y."/>
            <person name="Liu W."/>
            <person name="Li J."/>
            <person name="Wang J."/>
            <person name="Wei G."/>
            <person name="Liang K."/>
            <person name="Chen F.X."/>
            <person name="Xu Y."/>
        </authorList>
    </citation>
    <scope>STRUCTURE BY ELECTRON MICROSCOPY (3.50 ANGSTROMS) OF INTAC COMPLEX</scope>
    <scope>FUNCTION</scope>
    <scope>IDENTIFICATION IN THE INTAC COMPLEX</scope>
</reference>
<reference evidence="17" key="9">
    <citation type="journal article" date="2021" name="Science">
        <title>Structural basis of Integrator-mediated transcription regulation.</title>
        <authorList>
            <person name="Fianu I."/>
            <person name="Chen Y."/>
            <person name="Dienemann C."/>
            <person name="Dybkov O."/>
            <person name="Linden A."/>
            <person name="Urlaub H."/>
            <person name="Cramer P."/>
        </authorList>
    </citation>
    <scope>STRUCTURE BY ELECTRON MICROSCOPY (3.60 ANGSTROMS) OF INTEGRATOR COMPLEX</scope>
    <scope>IDENTIFICATION IN THE INTEGRATOR COMPLEX</scope>
</reference>
<reference evidence="18" key="10">
    <citation type="journal article" date="2023" name="Protein Cell">
        <title>Structural basis of INTAC-regulated transcription.</title>
        <authorList>
            <person name="Zheng H."/>
            <person name="Jin Q."/>
            <person name="Wang X."/>
            <person name="Qi Y."/>
            <person name="Liu W."/>
            <person name="Ren Y."/>
            <person name="Zhao D."/>
            <person name="Xavier Chen F."/>
            <person name="Cheng J."/>
            <person name="Chen X."/>
            <person name="Xu Y."/>
        </authorList>
    </citation>
    <scope>STRUCTURE BY ELECTRON MICROSCOPY (4.18 ANGSTROMS) OF INTAC COMPLEX</scope>
</reference>
<reference evidence="19 20 21" key="11">
    <citation type="journal article" date="2024" name="Nature">
        <title>Structural basis of Integrator-dependent RNA polymerase II termination.</title>
        <authorList>
            <person name="Fianu I."/>
            <person name="Ochmann M."/>
            <person name="Walshe J.L."/>
            <person name="Dybkov O."/>
            <person name="Cruz J.N."/>
            <person name="Urlaub H."/>
            <person name="Cramer P."/>
        </authorList>
    </citation>
    <scope>STRUCTURE BY ELECTRON MICROSCOPY (3.10 ANGSTROMS) OF INTAC COMPLEX</scope>
    <scope>FUNCTION</scope>
    <scope>IDENTIFICATION IN THE INTAC COMPLEX</scope>
</reference>
<evidence type="ECO:0000255" key="1"/>
<evidence type="ECO:0000269" key="2">
    <source>
    </source>
</evidence>
<evidence type="ECO:0000269" key="3">
    <source>
    </source>
</evidence>
<evidence type="ECO:0000269" key="4">
    <source>
    </source>
</evidence>
<evidence type="ECO:0000269" key="5">
    <source>
    </source>
</evidence>
<evidence type="ECO:0000269" key="6">
    <source>
    </source>
</evidence>
<evidence type="ECO:0000269" key="7">
    <source>
    </source>
</evidence>
<evidence type="ECO:0000269" key="8">
    <source>
    </source>
</evidence>
<evidence type="ECO:0000269" key="9">
    <source>
    </source>
</evidence>
<evidence type="ECO:0000269" key="10">
    <source>
    </source>
</evidence>
<evidence type="ECO:0000269" key="11">
    <source ref="3"/>
</evidence>
<evidence type="ECO:0000303" key="12">
    <source>
    </source>
</evidence>
<evidence type="ECO:0000303" key="13">
    <source>
    </source>
</evidence>
<evidence type="ECO:0000305" key="14"/>
<evidence type="ECO:0000312" key="15">
    <source>
        <dbReference type="HGNC" id="HGNC:29241"/>
    </source>
</evidence>
<evidence type="ECO:0007744" key="16">
    <source>
        <dbReference type="PDB" id="7CUN"/>
    </source>
</evidence>
<evidence type="ECO:0007744" key="17">
    <source>
        <dbReference type="PDB" id="7PKS"/>
    </source>
</evidence>
<evidence type="ECO:0007744" key="18">
    <source>
        <dbReference type="PDB" id="7YCX"/>
    </source>
</evidence>
<evidence type="ECO:0007744" key="19">
    <source>
        <dbReference type="PDB" id="8RBX"/>
    </source>
</evidence>
<evidence type="ECO:0007744" key="20">
    <source>
        <dbReference type="PDB" id="8RBZ"/>
    </source>
</evidence>
<evidence type="ECO:0007744" key="21">
    <source>
        <dbReference type="PDB" id="8RC4"/>
    </source>
</evidence>
<evidence type="ECO:0007829" key="22">
    <source>
        <dbReference type="PDB" id="7CUN"/>
    </source>
</evidence>
<evidence type="ECO:0007829" key="23">
    <source>
        <dbReference type="PDB" id="8RC4"/>
    </source>
</evidence>
<protein>
    <recommendedName>
        <fullName evidence="14">Integrator complex subunit 2</fullName>
        <shortName>Int2</shortName>
    </recommendedName>
</protein>